<protein>
    <recommendedName>
        <fullName evidence="1">Elongation factor G 1</fullName>
        <shortName evidence="1">EF-G 1</shortName>
    </recommendedName>
</protein>
<accession>Q74A61</accession>
<comment type="function">
    <text evidence="1">Catalyzes the GTP-dependent ribosomal translocation step during translation elongation. During this step, the ribosome changes from the pre-translocational (PRE) to the post-translocational (POST) state as the newly formed A-site-bound peptidyl-tRNA and P-site-bound deacylated tRNA move to the P and E sites, respectively. Catalyzes the coordinated movement of the two tRNA molecules, the mRNA and conformational changes in the ribosome.</text>
</comment>
<comment type="subcellular location">
    <subcellularLocation>
        <location evidence="1">Cytoplasm</location>
    </subcellularLocation>
</comment>
<comment type="similarity">
    <text evidence="1">Belongs to the TRAFAC class translation factor GTPase superfamily. Classic translation factor GTPase family. EF-G/EF-2 subfamily.</text>
</comment>
<proteinExistence type="inferred from homology"/>
<reference key="1">
    <citation type="journal article" date="2003" name="Science">
        <title>Genome of Geobacter sulfurreducens: metal reduction in subsurface environments.</title>
        <authorList>
            <person name="Methe B.A."/>
            <person name="Nelson K.E."/>
            <person name="Eisen J.A."/>
            <person name="Paulsen I.T."/>
            <person name="Nelson W.C."/>
            <person name="Heidelberg J.F."/>
            <person name="Wu D."/>
            <person name="Wu M."/>
            <person name="Ward N.L."/>
            <person name="Beanan M.J."/>
            <person name="Dodson R.J."/>
            <person name="Madupu R."/>
            <person name="Brinkac L.M."/>
            <person name="Daugherty S.C."/>
            <person name="DeBoy R.T."/>
            <person name="Durkin A.S."/>
            <person name="Gwinn M.L."/>
            <person name="Kolonay J.F."/>
            <person name="Sullivan S.A."/>
            <person name="Haft D.H."/>
            <person name="Selengut J."/>
            <person name="Davidsen T.M."/>
            <person name="Zafar N."/>
            <person name="White O."/>
            <person name="Tran B."/>
            <person name="Romero C."/>
            <person name="Forberger H.A."/>
            <person name="Weidman J.F."/>
            <person name="Khouri H.M."/>
            <person name="Feldblyum T.V."/>
            <person name="Utterback T.R."/>
            <person name="Van Aken S.E."/>
            <person name="Lovley D.R."/>
            <person name="Fraser C.M."/>
        </authorList>
    </citation>
    <scope>NUCLEOTIDE SEQUENCE [LARGE SCALE GENOMIC DNA]</scope>
    <source>
        <strain>ATCC 51573 / DSM 12127 / PCA</strain>
    </source>
</reference>
<evidence type="ECO:0000255" key="1">
    <source>
        <dbReference type="HAMAP-Rule" id="MF_00054"/>
    </source>
</evidence>
<gene>
    <name evidence="1" type="primary">fusA1</name>
    <name type="ordered locus">GSU2529</name>
</gene>
<keyword id="KW-0963">Cytoplasm</keyword>
<keyword id="KW-0251">Elongation factor</keyword>
<keyword id="KW-0342">GTP-binding</keyword>
<keyword id="KW-0547">Nucleotide-binding</keyword>
<keyword id="KW-0648">Protein biosynthesis</keyword>
<keyword id="KW-1185">Reference proteome</keyword>
<feature type="chain" id="PRO_0000091127" description="Elongation factor G 1">
    <location>
        <begin position="1"/>
        <end position="689"/>
    </location>
</feature>
<feature type="domain" description="tr-type G">
    <location>
        <begin position="7"/>
        <end position="282"/>
    </location>
</feature>
<feature type="binding site" evidence="1">
    <location>
        <begin position="16"/>
        <end position="23"/>
    </location>
    <ligand>
        <name>GTP</name>
        <dbReference type="ChEBI" id="CHEBI:37565"/>
    </ligand>
</feature>
<feature type="binding site" evidence="1">
    <location>
        <begin position="80"/>
        <end position="84"/>
    </location>
    <ligand>
        <name>GTP</name>
        <dbReference type="ChEBI" id="CHEBI:37565"/>
    </ligand>
</feature>
<feature type="binding site" evidence="1">
    <location>
        <begin position="134"/>
        <end position="137"/>
    </location>
    <ligand>
        <name>GTP</name>
        <dbReference type="ChEBI" id="CHEBI:37565"/>
    </ligand>
</feature>
<organism>
    <name type="scientific">Geobacter sulfurreducens (strain ATCC 51573 / DSM 12127 / PCA)</name>
    <dbReference type="NCBI Taxonomy" id="243231"/>
    <lineage>
        <taxon>Bacteria</taxon>
        <taxon>Pseudomonadati</taxon>
        <taxon>Thermodesulfobacteriota</taxon>
        <taxon>Desulfuromonadia</taxon>
        <taxon>Geobacterales</taxon>
        <taxon>Geobacteraceae</taxon>
        <taxon>Geobacter</taxon>
    </lineage>
</organism>
<name>EFG1_GEOSL</name>
<sequence length="689" mass="74799">MARPPLDQVRTIGIISHIDAGKTTVSERILFYTGETHKMGEVHDGEAVMDWMPQEQERGITITSTATVCTWRNHRLNLVDTPGHIDFTIEVERSLRVLDGAVTIFSAVEGVQPQSESVWRQADRYGVPRICFINKMDRVGADLRGTLRQMEEKLKARPVLLQLPVGEETGFRGVIDLLAEELITFADGDQGRTVSRGPVPADLLDAAREGRDAVAEAAADFDDAILADLLEGKDITAARLRGALRLGVLACRIFPVLLGSALRNKGIQPLLDAVVDFLPSPLDVPPAKGKRPGSETVDELPCDPGGPFCALAFKVQSEDGRKLTYLRVYSGTIKAGGAVWNSSRGCFEKLARLFRMHAHKREQIEEAAAGDIVAAAGLKEVLTGDTLCDPAHRIVLEGLAVPEPVVSLAVEARGVDDRDKLLPALEKLQWEDPTFRVHEDEETGQTILTGMGELHLEVVVDRLQREFGVGVKTGRPQVVYRETITRAVERREIFRAEHEGKVQGGEVLLQLSPLPRGAGVRVNVPDAAELGIGKELRDAVADSIGRACSAGARTGYPLTDLEVRVAAIPVEPGVTTDAGVRAAAGRGLMLAARDAGPTLLEPVMNLEIVIPADYAGKVLGSVQQKRGRIEGISSQGDTETIRASVPLAEMFGYMTELRSATKGRGTYTMEFSHYDRAPIEVLRRFGLEA</sequence>
<dbReference type="EMBL" id="AE017180">
    <property type="protein sequence ID" value="AAR35902.1"/>
    <property type="molecule type" value="Genomic_DNA"/>
</dbReference>
<dbReference type="RefSeq" id="NP_953575.1">
    <property type="nucleotide sequence ID" value="NC_002939.5"/>
</dbReference>
<dbReference type="SMR" id="Q74A61"/>
<dbReference type="STRING" id="243231.GSU2529"/>
<dbReference type="EnsemblBacteria" id="AAR35902">
    <property type="protein sequence ID" value="AAR35902"/>
    <property type="gene ID" value="GSU2529"/>
</dbReference>
<dbReference type="KEGG" id="gsu:GSU2529"/>
<dbReference type="PATRIC" id="fig|243231.5.peg.2558"/>
<dbReference type="eggNOG" id="COG0480">
    <property type="taxonomic scope" value="Bacteria"/>
</dbReference>
<dbReference type="HOGENOM" id="CLU_002794_4_1_7"/>
<dbReference type="InParanoid" id="Q74A61"/>
<dbReference type="OrthoDB" id="9801591at2"/>
<dbReference type="Proteomes" id="UP000000577">
    <property type="component" value="Chromosome"/>
</dbReference>
<dbReference type="GO" id="GO:0005737">
    <property type="term" value="C:cytoplasm"/>
    <property type="evidence" value="ECO:0007669"/>
    <property type="project" value="UniProtKB-SubCell"/>
</dbReference>
<dbReference type="GO" id="GO:0005525">
    <property type="term" value="F:GTP binding"/>
    <property type="evidence" value="ECO:0007669"/>
    <property type="project" value="UniProtKB-UniRule"/>
</dbReference>
<dbReference type="GO" id="GO:0003924">
    <property type="term" value="F:GTPase activity"/>
    <property type="evidence" value="ECO:0007669"/>
    <property type="project" value="InterPro"/>
</dbReference>
<dbReference type="GO" id="GO:0003746">
    <property type="term" value="F:translation elongation factor activity"/>
    <property type="evidence" value="ECO:0007669"/>
    <property type="project" value="UniProtKB-UniRule"/>
</dbReference>
<dbReference type="GO" id="GO:0032790">
    <property type="term" value="P:ribosome disassembly"/>
    <property type="evidence" value="ECO:0000318"/>
    <property type="project" value="GO_Central"/>
</dbReference>
<dbReference type="CDD" id="cd01886">
    <property type="entry name" value="EF-G"/>
    <property type="match status" value="1"/>
</dbReference>
<dbReference type="CDD" id="cd16262">
    <property type="entry name" value="EFG_III"/>
    <property type="match status" value="1"/>
</dbReference>
<dbReference type="CDD" id="cd01680">
    <property type="entry name" value="EFG_like_IV"/>
    <property type="match status" value="1"/>
</dbReference>
<dbReference type="CDD" id="cd03713">
    <property type="entry name" value="EFG_mtEFG_C"/>
    <property type="match status" value="1"/>
</dbReference>
<dbReference type="CDD" id="cd04088">
    <property type="entry name" value="EFG_mtEFG_II"/>
    <property type="match status" value="1"/>
</dbReference>
<dbReference type="FunFam" id="3.30.70.240:FF:000001">
    <property type="entry name" value="Elongation factor G"/>
    <property type="match status" value="1"/>
</dbReference>
<dbReference type="FunFam" id="3.30.70.870:FF:000001">
    <property type="entry name" value="Elongation factor G"/>
    <property type="match status" value="1"/>
</dbReference>
<dbReference type="FunFam" id="3.40.50.300:FF:000029">
    <property type="entry name" value="Elongation factor G"/>
    <property type="match status" value="1"/>
</dbReference>
<dbReference type="Gene3D" id="3.30.230.10">
    <property type="match status" value="1"/>
</dbReference>
<dbReference type="Gene3D" id="3.30.70.240">
    <property type="match status" value="1"/>
</dbReference>
<dbReference type="Gene3D" id="3.30.70.870">
    <property type="entry name" value="Elongation Factor G (Translational Gtpase), domain 3"/>
    <property type="match status" value="1"/>
</dbReference>
<dbReference type="Gene3D" id="3.40.50.300">
    <property type="entry name" value="P-loop containing nucleotide triphosphate hydrolases"/>
    <property type="match status" value="1"/>
</dbReference>
<dbReference type="Gene3D" id="2.40.30.10">
    <property type="entry name" value="Translation factors"/>
    <property type="match status" value="1"/>
</dbReference>
<dbReference type="HAMAP" id="MF_00054_B">
    <property type="entry name" value="EF_G_EF_2_B"/>
    <property type="match status" value="1"/>
</dbReference>
<dbReference type="InterPro" id="IPR041095">
    <property type="entry name" value="EFG_II"/>
</dbReference>
<dbReference type="InterPro" id="IPR009022">
    <property type="entry name" value="EFG_III"/>
</dbReference>
<dbReference type="InterPro" id="IPR035647">
    <property type="entry name" value="EFG_III/V"/>
</dbReference>
<dbReference type="InterPro" id="IPR035649">
    <property type="entry name" value="EFG_V"/>
</dbReference>
<dbReference type="InterPro" id="IPR000640">
    <property type="entry name" value="EFG_V-like"/>
</dbReference>
<dbReference type="InterPro" id="IPR004161">
    <property type="entry name" value="EFTu-like_2"/>
</dbReference>
<dbReference type="InterPro" id="IPR031157">
    <property type="entry name" value="G_TR_CS"/>
</dbReference>
<dbReference type="InterPro" id="IPR027417">
    <property type="entry name" value="P-loop_NTPase"/>
</dbReference>
<dbReference type="InterPro" id="IPR020568">
    <property type="entry name" value="Ribosomal_Su5_D2-typ_SF"/>
</dbReference>
<dbReference type="InterPro" id="IPR014721">
    <property type="entry name" value="Ribsml_uS5_D2-typ_fold_subgr"/>
</dbReference>
<dbReference type="InterPro" id="IPR005225">
    <property type="entry name" value="Small_GTP-bd"/>
</dbReference>
<dbReference type="InterPro" id="IPR000795">
    <property type="entry name" value="T_Tr_GTP-bd_dom"/>
</dbReference>
<dbReference type="InterPro" id="IPR009000">
    <property type="entry name" value="Transl_B-barrel_sf"/>
</dbReference>
<dbReference type="InterPro" id="IPR004540">
    <property type="entry name" value="Transl_elong_EFG/EF2"/>
</dbReference>
<dbReference type="InterPro" id="IPR005517">
    <property type="entry name" value="Transl_elong_EFG/EF2_IV"/>
</dbReference>
<dbReference type="NCBIfam" id="TIGR00484">
    <property type="entry name" value="EF-G"/>
    <property type="match status" value="1"/>
</dbReference>
<dbReference type="NCBIfam" id="NF009381">
    <property type="entry name" value="PRK12740.1-5"/>
    <property type="match status" value="1"/>
</dbReference>
<dbReference type="NCBIfam" id="TIGR00231">
    <property type="entry name" value="small_GTP"/>
    <property type="match status" value="1"/>
</dbReference>
<dbReference type="PANTHER" id="PTHR43261:SF1">
    <property type="entry name" value="RIBOSOME-RELEASING FACTOR 2, MITOCHONDRIAL"/>
    <property type="match status" value="1"/>
</dbReference>
<dbReference type="PANTHER" id="PTHR43261">
    <property type="entry name" value="TRANSLATION ELONGATION FACTOR G-RELATED"/>
    <property type="match status" value="1"/>
</dbReference>
<dbReference type="Pfam" id="PF00679">
    <property type="entry name" value="EFG_C"/>
    <property type="match status" value="1"/>
</dbReference>
<dbReference type="Pfam" id="PF14492">
    <property type="entry name" value="EFG_III"/>
    <property type="match status" value="1"/>
</dbReference>
<dbReference type="Pfam" id="PF03764">
    <property type="entry name" value="EFG_IV"/>
    <property type="match status" value="1"/>
</dbReference>
<dbReference type="Pfam" id="PF00009">
    <property type="entry name" value="GTP_EFTU"/>
    <property type="match status" value="1"/>
</dbReference>
<dbReference type="Pfam" id="PF03144">
    <property type="entry name" value="GTP_EFTU_D2"/>
    <property type="match status" value="1"/>
</dbReference>
<dbReference type="PRINTS" id="PR00315">
    <property type="entry name" value="ELONGATNFCT"/>
</dbReference>
<dbReference type="SMART" id="SM00838">
    <property type="entry name" value="EFG_C"/>
    <property type="match status" value="1"/>
</dbReference>
<dbReference type="SMART" id="SM00889">
    <property type="entry name" value="EFG_IV"/>
    <property type="match status" value="1"/>
</dbReference>
<dbReference type="SUPFAM" id="SSF54980">
    <property type="entry name" value="EF-G C-terminal domain-like"/>
    <property type="match status" value="2"/>
</dbReference>
<dbReference type="SUPFAM" id="SSF52540">
    <property type="entry name" value="P-loop containing nucleoside triphosphate hydrolases"/>
    <property type="match status" value="1"/>
</dbReference>
<dbReference type="SUPFAM" id="SSF54211">
    <property type="entry name" value="Ribosomal protein S5 domain 2-like"/>
    <property type="match status" value="1"/>
</dbReference>
<dbReference type="SUPFAM" id="SSF50447">
    <property type="entry name" value="Translation proteins"/>
    <property type="match status" value="1"/>
</dbReference>
<dbReference type="PROSITE" id="PS00301">
    <property type="entry name" value="G_TR_1"/>
    <property type="match status" value="1"/>
</dbReference>
<dbReference type="PROSITE" id="PS51722">
    <property type="entry name" value="G_TR_2"/>
    <property type="match status" value="1"/>
</dbReference>